<dbReference type="EC" id="2.4.2.8" evidence="1"/>
<dbReference type="EMBL" id="CP000477">
    <property type="protein sequence ID" value="ABK14894.1"/>
    <property type="molecule type" value="Genomic_DNA"/>
</dbReference>
<dbReference type="RefSeq" id="WP_011696287.1">
    <property type="nucleotide sequence ID" value="NC_008553.1"/>
</dbReference>
<dbReference type="SMR" id="A0B870"/>
<dbReference type="STRING" id="349307.Mthe_1111"/>
<dbReference type="GeneID" id="4463386"/>
<dbReference type="KEGG" id="mtp:Mthe_1111"/>
<dbReference type="HOGENOM" id="CLU_126376_0_0_2"/>
<dbReference type="OrthoDB" id="8323at2157"/>
<dbReference type="UniPathway" id="UPA00591">
    <property type="reaction ID" value="UER00648"/>
</dbReference>
<dbReference type="Proteomes" id="UP000000674">
    <property type="component" value="Chromosome"/>
</dbReference>
<dbReference type="GO" id="GO:0005737">
    <property type="term" value="C:cytoplasm"/>
    <property type="evidence" value="ECO:0007669"/>
    <property type="project" value="UniProtKB-SubCell"/>
</dbReference>
<dbReference type="GO" id="GO:0052657">
    <property type="term" value="F:guanine phosphoribosyltransferase activity"/>
    <property type="evidence" value="ECO:0007669"/>
    <property type="project" value="RHEA"/>
</dbReference>
<dbReference type="GO" id="GO:0004422">
    <property type="term" value="F:hypoxanthine phosphoribosyltransferase activity"/>
    <property type="evidence" value="ECO:0007669"/>
    <property type="project" value="UniProtKB-UniRule"/>
</dbReference>
<dbReference type="GO" id="GO:0032264">
    <property type="term" value="P:IMP salvage"/>
    <property type="evidence" value="ECO:0007669"/>
    <property type="project" value="UniProtKB-UniRule"/>
</dbReference>
<dbReference type="GO" id="GO:0006166">
    <property type="term" value="P:purine ribonucleoside salvage"/>
    <property type="evidence" value="ECO:0007669"/>
    <property type="project" value="UniProtKB-KW"/>
</dbReference>
<dbReference type="CDD" id="cd06223">
    <property type="entry name" value="PRTases_typeI"/>
    <property type="match status" value="1"/>
</dbReference>
<dbReference type="Gene3D" id="3.40.50.2020">
    <property type="match status" value="1"/>
</dbReference>
<dbReference type="HAMAP" id="MF_01467">
    <property type="entry name" value="Hypx_phosphoribosyltr"/>
    <property type="match status" value="1"/>
</dbReference>
<dbReference type="InterPro" id="IPR026597">
    <property type="entry name" value="HGPRTase-like"/>
</dbReference>
<dbReference type="InterPro" id="IPR000836">
    <property type="entry name" value="PRibTrfase_dom"/>
</dbReference>
<dbReference type="InterPro" id="IPR029057">
    <property type="entry name" value="PRTase-like"/>
</dbReference>
<dbReference type="InterPro" id="IPR050118">
    <property type="entry name" value="Pur/Pyrimidine_PRTase"/>
</dbReference>
<dbReference type="NCBIfam" id="NF040646">
    <property type="entry name" value="HPT_Archaea"/>
    <property type="match status" value="1"/>
</dbReference>
<dbReference type="NCBIfam" id="NF002635">
    <property type="entry name" value="PRK02304.1-4"/>
    <property type="match status" value="1"/>
</dbReference>
<dbReference type="PANTHER" id="PTHR43864">
    <property type="entry name" value="HYPOXANTHINE/GUANINE PHOSPHORIBOSYLTRANSFERASE"/>
    <property type="match status" value="1"/>
</dbReference>
<dbReference type="PANTHER" id="PTHR43864:SF1">
    <property type="entry name" value="XANTHINE PHOSPHORIBOSYLTRANSFERASE"/>
    <property type="match status" value="1"/>
</dbReference>
<dbReference type="Pfam" id="PF00156">
    <property type="entry name" value="Pribosyltran"/>
    <property type="match status" value="1"/>
</dbReference>
<dbReference type="SUPFAM" id="SSF53271">
    <property type="entry name" value="PRTase-like"/>
    <property type="match status" value="1"/>
</dbReference>
<name>HPRT_METTP</name>
<sequence length="190" mass="20888">MLEILKRSLYDAPVFKRGDYNYFIHPITDGVPETRPELIREVVCHIIRIADLDVDKIVTVEAMGIPIGGALSLVTDIPLVIIRKKMYGLPGEIEVSQVTGYSKSKIYLNGIKKGDRVIFVDDVVSTGGTAIAVMKALEAAGAVIRDAVVVIERGAGAERVRSAGYPLKTMVKVDVDEKRVFRVEEVSFRS</sequence>
<protein>
    <recommendedName>
        <fullName evidence="1">Hypoxanthine/guanine phosphoribosyltransferase</fullName>
        <shortName evidence="1">HGPRTase</shortName>
        <ecNumber evidence="1">2.4.2.8</ecNumber>
    </recommendedName>
</protein>
<accession>A0B870</accession>
<feature type="chain" id="PRO_0000415478" description="Hypoxanthine/guanine phosphoribosyltransferase">
    <location>
        <begin position="1"/>
        <end position="190"/>
    </location>
</feature>
<proteinExistence type="inferred from homology"/>
<keyword id="KW-0963">Cytoplasm</keyword>
<keyword id="KW-0328">Glycosyltransferase</keyword>
<keyword id="KW-0660">Purine salvage</keyword>
<keyword id="KW-1185">Reference proteome</keyword>
<keyword id="KW-0808">Transferase</keyword>
<organism>
    <name type="scientific">Methanothrix thermoacetophila (strain DSM 6194 / JCM 14653 / NBRC 101360 / PT)</name>
    <name type="common">Methanosaeta thermophila</name>
    <dbReference type="NCBI Taxonomy" id="349307"/>
    <lineage>
        <taxon>Archaea</taxon>
        <taxon>Methanobacteriati</taxon>
        <taxon>Methanobacteriota</taxon>
        <taxon>Stenosarchaea group</taxon>
        <taxon>Methanomicrobia</taxon>
        <taxon>Methanotrichales</taxon>
        <taxon>Methanotrichaceae</taxon>
        <taxon>Methanothrix</taxon>
    </lineage>
</organism>
<gene>
    <name evidence="1" type="primary">hpt</name>
    <name type="ordered locus">Mthe_1111</name>
</gene>
<reference key="1">
    <citation type="submission" date="2006-10" db="EMBL/GenBank/DDBJ databases">
        <title>Complete sequence of Methanosaeta thermophila PT.</title>
        <authorList>
            <consortium name="US DOE Joint Genome Institute"/>
            <person name="Copeland A."/>
            <person name="Lucas S."/>
            <person name="Lapidus A."/>
            <person name="Barry K."/>
            <person name="Detter J.C."/>
            <person name="Glavina del Rio T."/>
            <person name="Hammon N."/>
            <person name="Israni S."/>
            <person name="Pitluck S."/>
            <person name="Chain P."/>
            <person name="Malfatti S."/>
            <person name="Shin M."/>
            <person name="Vergez L."/>
            <person name="Schmutz J."/>
            <person name="Larimer F."/>
            <person name="Land M."/>
            <person name="Hauser L."/>
            <person name="Kyrpides N."/>
            <person name="Kim E."/>
            <person name="Smith K.S."/>
            <person name="Ingram-Smith C."/>
            <person name="Richardson P."/>
        </authorList>
    </citation>
    <scope>NUCLEOTIDE SEQUENCE [LARGE SCALE GENOMIC DNA]</scope>
    <source>
        <strain>DSM 6194 / JCM 14653 / NBRC 101360 / PT</strain>
    </source>
</reference>
<comment type="function">
    <text evidence="1">Catalyzes a salvage reaction resulting in the formation of IMP that is energically less costly than de novo synthesis.</text>
</comment>
<comment type="catalytic activity">
    <reaction evidence="1">
        <text>IMP + diphosphate = hypoxanthine + 5-phospho-alpha-D-ribose 1-diphosphate</text>
        <dbReference type="Rhea" id="RHEA:17973"/>
        <dbReference type="ChEBI" id="CHEBI:17368"/>
        <dbReference type="ChEBI" id="CHEBI:33019"/>
        <dbReference type="ChEBI" id="CHEBI:58017"/>
        <dbReference type="ChEBI" id="CHEBI:58053"/>
        <dbReference type="EC" id="2.4.2.8"/>
    </reaction>
</comment>
<comment type="catalytic activity">
    <reaction evidence="1">
        <text>GMP + diphosphate = guanine + 5-phospho-alpha-D-ribose 1-diphosphate</text>
        <dbReference type="Rhea" id="RHEA:25424"/>
        <dbReference type="ChEBI" id="CHEBI:16235"/>
        <dbReference type="ChEBI" id="CHEBI:33019"/>
        <dbReference type="ChEBI" id="CHEBI:58017"/>
        <dbReference type="ChEBI" id="CHEBI:58115"/>
        <dbReference type="EC" id="2.4.2.8"/>
    </reaction>
</comment>
<comment type="pathway">
    <text evidence="1">Purine metabolism; IMP biosynthesis via salvage pathway; IMP from hypoxanthine: step 1/1.</text>
</comment>
<comment type="subunit">
    <text evidence="1">Homodimer.</text>
</comment>
<comment type="subcellular location">
    <subcellularLocation>
        <location evidence="1">Cytoplasm</location>
    </subcellularLocation>
</comment>
<comment type="similarity">
    <text evidence="1">Belongs to the purine/pyrimidine phosphoribosyltransferase family. Archaeal HPRT subfamily.</text>
</comment>
<evidence type="ECO:0000255" key="1">
    <source>
        <dbReference type="HAMAP-Rule" id="MF_01467"/>
    </source>
</evidence>